<keyword id="KW-0002">3D-structure</keyword>
<keyword id="KW-0067">ATP-binding</keyword>
<keyword id="KW-0963">Cytoplasm</keyword>
<keyword id="KW-0238">DNA-binding</keyword>
<keyword id="KW-0413">Isomerase</keyword>
<keyword id="KW-0460">Magnesium</keyword>
<keyword id="KW-0479">Metal-binding</keyword>
<keyword id="KW-0547">Nucleotide-binding</keyword>
<keyword id="KW-1185">Reference proteome</keyword>
<keyword id="KW-0799">Topoisomerase</keyword>
<evidence type="ECO:0000255" key="1">
    <source>
        <dbReference type="HAMAP-Rule" id="MF_01898"/>
    </source>
</evidence>
<evidence type="ECO:0000269" key="2">
    <source>
    </source>
</evidence>
<evidence type="ECO:0000269" key="3">
    <source>
    </source>
</evidence>
<evidence type="ECO:0007829" key="4">
    <source>
        <dbReference type="PDB" id="4K4O"/>
    </source>
</evidence>
<protein>
    <recommendedName>
        <fullName evidence="1">DNA gyrase subunit B</fullName>
        <ecNumber evidence="1">5.6.2.2</ecNumber>
    </recommendedName>
</protein>
<sequence>MRERAQEYDASQIQVLEGLEAVRKRPGMYIGSTSGEGLHHLVWEIVDNSIDEALAGFAKSIQVIIEPDDSITVIDDGRGIPVGIQAKTGRPAVETVFTVLHAGGKFGGGGYKVSGGLHGVGSSVVNALSTSLDVRVYKDGKVYYQEYRRGAVVDDLKVIEETDRHGTTVHFIPDPEIFTETTVYDFDKLATRVRELAFLNRGLHISIEDRREGQEDKKEYHYEGGIKSYVEHLNANKDVIFPEPIFIEGEQQDITVEVSMQYTDGYHSNILSFANNIHTYEGGTHESGFKTSLTRVINDYARKQKLMKENDEKLTGEDVREGLTAVVSIKHPDPQFEGQTKTKLGNSEVRTVTDRLFSEYFTKFLMENPTVGKQIVEKGMLASKARLAAKRAREVTRRKGALEISNLPGKLADCSSKDPEKCELFIVEGDSAGGSAKQGRSREFQAILPIRGKILNVEKASMDKILANEEIRSLFTAMGTGFGEDFDVSKARYHKLVIMTDADVDGAHIRTLLLTLFYRFMRPIVEAGYVYIAQPPLYGVKQGKNITYVQPGKHAEEELAKVLEELPASPKPSVQRYKGLGEMDDHQLWETTMDPEKRLMARVSVDDAIEADQIFEMLMGDRVEPRRAFIEENAHYVKNLDI</sequence>
<gene>
    <name evidence="1" type="primary">gyrB</name>
    <name type="ordered locus">EF_0005</name>
</gene>
<name>GYRB_ENTFA</name>
<reference key="1">
    <citation type="journal article" date="2003" name="Science">
        <title>Role of mobile DNA in the evolution of vancomycin-resistant Enterococcus faecalis.</title>
        <authorList>
            <person name="Paulsen I.T."/>
            <person name="Banerjei L."/>
            <person name="Myers G.S.A."/>
            <person name="Nelson K.E."/>
            <person name="Seshadri R."/>
            <person name="Read T.D."/>
            <person name="Fouts D.E."/>
            <person name="Eisen J.A."/>
            <person name="Gill S.R."/>
            <person name="Heidelberg J.F."/>
            <person name="Tettelin H."/>
            <person name="Dodson R.J."/>
            <person name="Umayam L.A."/>
            <person name="Brinkac L.M."/>
            <person name="Beanan M.J."/>
            <person name="Daugherty S.C."/>
            <person name="DeBoy R.T."/>
            <person name="Durkin S.A."/>
            <person name="Kolonay J.F."/>
            <person name="Madupu R."/>
            <person name="Nelson W.C."/>
            <person name="Vamathevan J.J."/>
            <person name="Tran B."/>
            <person name="Upton J."/>
            <person name="Hansen T."/>
            <person name="Shetty J."/>
            <person name="Khouri H.M."/>
            <person name="Utterback T.R."/>
            <person name="Radune D."/>
            <person name="Ketchum K.A."/>
            <person name="Dougherty B.A."/>
            <person name="Fraser C.M."/>
        </authorList>
    </citation>
    <scope>NUCLEOTIDE SEQUENCE [LARGE SCALE GENOMIC DNA]</scope>
    <source>
        <strain>ATCC 700802 / V583</strain>
    </source>
</reference>
<reference key="2">
    <citation type="journal article" date="2013" name="Bioorg. Med. Chem. Lett.">
        <title>Pyrrolopyrimidine inhibitors of DNA gyrase B (GyrB) and topoisomerase IV (ParE). Part I: Structure guided discovery and optimization of dual targeting agents with potent, broad-spectrum enzymatic activity.</title>
        <authorList>
            <person name="Tari L.W."/>
            <person name="Trzoss M."/>
            <person name="Bensen D.C."/>
            <person name="Li X."/>
            <person name="Chen Z."/>
            <person name="Lam T."/>
            <person name="Zhang J."/>
            <person name="Creighton C.J."/>
            <person name="Cunningham M.L."/>
            <person name="Kwan B."/>
            <person name="Stidham M."/>
            <person name="Shaw K.J."/>
            <person name="Lightstone F.C."/>
            <person name="Wong S.E."/>
            <person name="Nguyen T.B."/>
            <person name="Nix J."/>
            <person name="Finn J."/>
        </authorList>
    </citation>
    <scope>X-RAY CRYSTALLOGRAPHY (1.69 ANGSTROMS) OF 18-224 IN COMPLEX WITH INHIBITORS</scope>
    <scope>FUNCTION</scope>
    <scope>ACTIVITY REGULATION</scope>
</reference>
<reference key="3">
    <citation type="journal article" date="2013" name="PLoS ONE">
        <title>Tricyclic GyrB/ParE (TriBE) inhibitors: a new class of broad-spectrum dual-targeting antibacterial agents.</title>
        <authorList>
            <person name="Tari L.W."/>
            <person name="Li X."/>
            <person name="Trzoss M."/>
            <person name="Bensen D.C."/>
            <person name="Chen Z."/>
            <person name="Lam T."/>
            <person name="Zhang J."/>
            <person name="Lee S.J."/>
            <person name="Hough G."/>
            <person name="Phillipson D."/>
            <person name="Akers-Rodriguez S."/>
            <person name="Cunningham M.L."/>
            <person name="Kwan B.P."/>
            <person name="Nelson K.J."/>
            <person name="Castellano A."/>
            <person name="Locke J.B."/>
            <person name="Brown-Driver V."/>
            <person name="Murphy T.M."/>
            <person name="Ong V.S."/>
            <person name="Pillar C.M."/>
            <person name="Shinabarger D.L."/>
            <person name="Nix J."/>
            <person name="Lightstone F.C."/>
            <person name="Wong S.E."/>
            <person name="Nguyen T.B."/>
            <person name="Shaw K.J."/>
            <person name="Finn J."/>
        </authorList>
    </citation>
    <scope>X-RAY CRYSTALLOGRAPHY (1.30 ANGSTROMS) OF 18-224 IN COMPLEX WITH INHIBITORS</scope>
    <scope>FUNCTION</scope>
    <scope>ACTIVITY REGULATION</scope>
</reference>
<feature type="chain" id="PRO_0000435540" description="DNA gyrase subunit B">
    <location>
        <begin position="1"/>
        <end position="642"/>
    </location>
</feature>
<feature type="domain" description="Toprim" evidence="1">
    <location>
        <begin position="422"/>
        <end position="536"/>
    </location>
</feature>
<feature type="binding site" evidence="1">
    <location>
        <position position="428"/>
    </location>
    <ligand>
        <name>Mg(2+)</name>
        <dbReference type="ChEBI" id="CHEBI:18420"/>
        <label>1</label>
        <note>catalytic</note>
    </ligand>
</feature>
<feature type="binding site" evidence="1">
    <location>
        <position position="501"/>
    </location>
    <ligand>
        <name>Mg(2+)</name>
        <dbReference type="ChEBI" id="CHEBI:18420"/>
        <label>1</label>
        <note>catalytic</note>
    </ligand>
</feature>
<feature type="binding site" evidence="1">
    <location>
        <position position="501"/>
    </location>
    <ligand>
        <name>Mg(2+)</name>
        <dbReference type="ChEBI" id="CHEBI:18420"/>
        <label>2</label>
    </ligand>
</feature>
<feature type="binding site" evidence="1">
    <location>
        <position position="503"/>
    </location>
    <ligand>
        <name>Mg(2+)</name>
        <dbReference type="ChEBI" id="CHEBI:18420"/>
        <label>2</label>
    </ligand>
</feature>
<feature type="site" description="Interaction with DNA" evidence="1">
    <location>
        <position position="453"/>
    </location>
</feature>
<feature type="site" description="Interaction with DNA" evidence="1">
    <location>
        <position position="456"/>
    </location>
</feature>
<feature type="helix" evidence="4">
    <location>
        <begin position="19"/>
        <end position="24"/>
    </location>
</feature>
<feature type="helix" evidence="4">
    <location>
        <begin position="26"/>
        <end position="30"/>
    </location>
</feature>
<feature type="helix" evidence="4">
    <location>
        <begin position="35"/>
        <end position="54"/>
    </location>
</feature>
<feature type="strand" evidence="4">
    <location>
        <begin position="60"/>
        <end position="65"/>
    </location>
</feature>
<feature type="strand" evidence="4">
    <location>
        <begin position="71"/>
        <end position="75"/>
    </location>
</feature>
<feature type="turn" evidence="4">
    <location>
        <begin position="86"/>
        <end position="88"/>
    </location>
</feature>
<feature type="strand" evidence="4">
    <location>
        <begin position="89"/>
        <end position="91"/>
    </location>
</feature>
<feature type="helix" evidence="4">
    <location>
        <begin position="92"/>
        <end position="98"/>
    </location>
</feature>
<feature type="helix" evidence="4">
    <location>
        <begin position="122"/>
        <end position="127"/>
    </location>
</feature>
<feature type="strand" evidence="4">
    <location>
        <begin position="129"/>
        <end position="138"/>
    </location>
</feature>
<feature type="strand" evidence="4">
    <location>
        <begin position="141"/>
        <end position="148"/>
    </location>
</feature>
<feature type="strand" evidence="4">
    <location>
        <begin position="157"/>
        <end position="161"/>
    </location>
</feature>
<feature type="strand" evidence="4">
    <location>
        <begin position="166"/>
        <end position="173"/>
    </location>
</feature>
<feature type="turn" evidence="4">
    <location>
        <begin position="175"/>
        <end position="177"/>
    </location>
</feature>
<feature type="helix" evidence="4">
    <location>
        <begin position="186"/>
        <end position="199"/>
    </location>
</feature>
<feature type="turn" evidence="4">
    <location>
        <begin position="200"/>
        <end position="202"/>
    </location>
</feature>
<feature type="strand" evidence="4">
    <location>
        <begin position="204"/>
        <end position="209"/>
    </location>
</feature>
<feature type="strand" evidence="4">
    <location>
        <begin position="216"/>
        <end position="221"/>
    </location>
</feature>
<organism>
    <name type="scientific">Enterococcus faecalis (strain ATCC 700802 / V583)</name>
    <dbReference type="NCBI Taxonomy" id="226185"/>
    <lineage>
        <taxon>Bacteria</taxon>
        <taxon>Bacillati</taxon>
        <taxon>Bacillota</taxon>
        <taxon>Bacilli</taxon>
        <taxon>Lactobacillales</taxon>
        <taxon>Enterococcaceae</taxon>
        <taxon>Enterococcus</taxon>
    </lineage>
</organism>
<accession>Q839Z1</accession>
<dbReference type="EC" id="5.6.2.2" evidence="1"/>
<dbReference type="EMBL" id="AE016830">
    <property type="protein sequence ID" value="AAO79890.1"/>
    <property type="molecule type" value="Genomic_DNA"/>
</dbReference>
<dbReference type="RefSeq" id="NP_813818.1">
    <property type="nucleotide sequence ID" value="NC_004668.1"/>
</dbReference>
<dbReference type="PDB" id="4GEE">
    <property type="method" value="X-ray"/>
    <property type="resolution" value="1.70 A"/>
    <property type="chains" value="A=18-224"/>
</dbReference>
<dbReference type="PDB" id="4GFN">
    <property type="method" value="X-ray"/>
    <property type="resolution" value="1.90 A"/>
    <property type="chains" value="A=18-224"/>
</dbReference>
<dbReference type="PDB" id="4GGL">
    <property type="method" value="X-ray"/>
    <property type="resolution" value="1.69 A"/>
    <property type="chains" value="A=18-224"/>
</dbReference>
<dbReference type="PDB" id="4HXW">
    <property type="method" value="X-ray"/>
    <property type="resolution" value="1.69 A"/>
    <property type="chains" value="A=18-224"/>
</dbReference>
<dbReference type="PDB" id="4K4O">
    <property type="method" value="X-ray"/>
    <property type="resolution" value="1.30 A"/>
    <property type="chains" value="A=18-224"/>
</dbReference>
<dbReference type="PDB" id="4KSG">
    <property type="method" value="X-ray"/>
    <property type="resolution" value="1.75 A"/>
    <property type="chains" value="A=18-224"/>
</dbReference>
<dbReference type="PDB" id="4KSH">
    <property type="method" value="X-ray"/>
    <property type="resolution" value="1.70 A"/>
    <property type="chains" value="A=18-224"/>
</dbReference>
<dbReference type="PDB" id="4KTN">
    <property type="method" value="X-ray"/>
    <property type="resolution" value="1.69 A"/>
    <property type="chains" value="A=18-224"/>
</dbReference>
<dbReference type="PDBsum" id="4GEE"/>
<dbReference type="PDBsum" id="4GFN"/>
<dbReference type="PDBsum" id="4GGL"/>
<dbReference type="PDBsum" id="4HXW"/>
<dbReference type="PDBsum" id="4K4O"/>
<dbReference type="PDBsum" id="4KSG"/>
<dbReference type="PDBsum" id="4KSH"/>
<dbReference type="PDBsum" id="4KTN"/>
<dbReference type="SMR" id="Q839Z1"/>
<dbReference type="STRING" id="226185.EF_0005"/>
<dbReference type="EnsemblBacteria" id="AAO79890">
    <property type="protein sequence ID" value="AAO79890"/>
    <property type="gene ID" value="EF_0005"/>
</dbReference>
<dbReference type="KEGG" id="efa:EF0005"/>
<dbReference type="PATRIC" id="fig|226185.9.peg.5"/>
<dbReference type="eggNOG" id="COG0187">
    <property type="taxonomic scope" value="Bacteria"/>
</dbReference>
<dbReference type="HOGENOM" id="CLU_006146_4_1_9"/>
<dbReference type="EvolutionaryTrace" id="Q839Z1"/>
<dbReference type="Proteomes" id="UP000001415">
    <property type="component" value="Chromosome"/>
</dbReference>
<dbReference type="GO" id="GO:0005694">
    <property type="term" value="C:chromosome"/>
    <property type="evidence" value="ECO:0007669"/>
    <property type="project" value="InterPro"/>
</dbReference>
<dbReference type="GO" id="GO:0005737">
    <property type="term" value="C:cytoplasm"/>
    <property type="evidence" value="ECO:0007669"/>
    <property type="project" value="UniProtKB-SubCell"/>
</dbReference>
<dbReference type="GO" id="GO:0005524">
    <property type="term" value="F:ATP binding"/>
    <property type="evidence" value="ECO:0007669"/>
    <property type="project" value="UniProtKB-UniRule"/>
</dbReference>
<dbReference type="GO" id="GO:0003677">
    <property type="term" value="F:DNA binding"/>
    <property type="evidence" value="ECO:0007669"/>
    <property type="project" value="UniProtKB-KW"/>
</dbReference>
<dbReference type="GO" id="GO:0034335">
    <property type="term" value="F:DNA negative supercoiling activity"/>
    <property type="evidence" value="ECO:0007669"/>
    <property type="project" value="UniProtKB-ARBA"/>
</dbReference>
<dbReference type="GO" id="GO:0046872">
    <property type="term" value="F:metal ion binding"/>
    <property type="evidence" value="ECO:0007669"/>
    <property type="project" value="UniProtKB-KW"/>
</dbReference>
<dbReference type="GO" id="GO:0006265">
    <property type="term" value="P:DNA topological change"/>
    <property type="evidence" value="ECO:0007669"/>
    <property type="project" value="UniProtKB-UniRule"/>
</dbReference>
<dbReference type="GO" id="GO:0006261">
    <property type="term" value="P:DNA-templated DNA replication"/>
    <property type="evidence" value="ECO:0007669"/>
    <property type="project" value="UniProtKB-UniRule"/>
</dbReference>
<dbReference type="CDD" id="cd16928">
    <property type="entry name" value="HATPase_GyrB-like"/>
    <property type="match status" value="1"/>
</dbReference>
<dbReference type="CDD" id="cd00822">
    <property type="entry name" value="TopoII_Trans_DNA_gyrase"/>
    <property type="match status" value="1"/>
</dbReference>
<dbReference type="CDD" id="cd03366">
    <property type="entry name" value="TOPRIM_TopoIIA_GyrB"/>
    <property type="match status" value="1"/>
</dbReference>
<dbReference type="FunFam" id="3.30.230.10:FF:000005">
    <property type="entry name" value="DNA gyrase subunit B"/>
    <property type="match status" value="1"/>
</dbReference>
<dbReference type="FunFam" id="3.30.565.10:FF:000002">
    <property type="entry name" value="DNA gyrase subunit B"/>
    <property type="match status" value="1"/>
</dbReference>
<dbReference type="FunFam" id="3.40.50.670:FF:000002">
    <property type="entry name" value="DNA gyrase subunit B"/>
    <property type="match status" value="1"/>
</dbReference>
<dbReference type="Gene3D" id="3.30.230.10">
    <property type="match status" value="1"/>
</dbReference>
<dbReference type="Gene3D" id="3.40.50.670">
    <property type="match status" value="1"/>
</dbReference>
<dbReference type="Gene3D" id="3.30.565.10">
    <property type="entry name" value="Histidine kinase-like ATPase, C-terminal domain"/>
    <property type="match status" value="1"/>
</dbReference>
<dbReference type="HAMAP" id="MF_01898">
    <property type="entry name" value="GyrB"/>
    <property type="match status" value="1"/>
</dbReference>
<dbReference type="InterPro" id="IPR002288">
    <property type="entry name" value="DNA_gyrase_B_C"/>
</dbReference>
<dbReference type="InterPro" id="IPR011557">
    <property type="entry name" value="GyrB"/>
</dbReference>
<dbReference type="InterPro" id="IPR036890">
    <property type="entry name" value="HATPase_C_sf"/>
</dbReference>
<dbReference type="InterPro" id="IPR020568">
    <property type="entry name" value="Ribosomal_Su5_D2-typ_SF"/>
</dbReference>
<dbReference type="InterPro" id="IPR014721">
    <property type="entry name" value="Ribsml_uS5_D2-typ_fold_subgr"/>
</dbReference>
<dbReference type="InterPro" id="IPR001241">
    <property type="entry name" value="Topo_IIA"/>
</dbReference>
<dbReference type="InterPro" id="IPR013760">
    <property type="entry name" value="Topo_IIA-like_dom_sf"/>
</dbReference>
<dbReference type="InterPro" id="IPR000565">
    <property type="entry name" value="Topo_IIA_B"/>
</dbReference>
<dbReference type="InterPro" id="IPR013759">
    <property type="entry name" value="Topo_IIA_B_C"/>
</dbReference>
<dbReference type="InterPro" id="IPR013506">
    <property type="entry name" value="Topo_IIA_bsu_dom2"/>
</dbReference>
<dbReference type="InterPro" id="IPR018522">
    <property type="entry name" value="TopoIIA_CS"/>
</dbReference>
<dbReference type="InterPro" id="IPR006171">
    <property type="entry name" value="TOPRIM_dom"/>
</dbReference>
<dbReference type="InterPro" id="IPR034160">
    <property type="entry name" value="TOPRIM_GyrB"/>
</dbReference>
<dbReference type="NCBIfam" id="TIGR01059">
    <property type="entry name" value="gyrB"/>
    <property type="match status" value="1"/>
</dbReference>
<dbReference type="NCBIfam" id="NF004189">
    <property type="entry name" value="PRK05644.1"/>
    <property type="match status" value="1"/>
</dbReference>
<dbReference type="NCBIfam" id="NF011501">
    <property type="entry name" value="PRK14939.1"/>
    <property type="match status" value="1"/>
</dbReference>
<dbReference type="PANTHER" id="PTHR45866:SF1">
    <property type="entry name" value="DNA GYRASE SUBUNIT B, MITOCHONDRIAL"/>
    <property type="match status" value="1"/>
</dbReference>
<dbReference type="PANTHER" id="PTHR45866">
    <property type="entry name" value="DNA GYRASE/TOPOISOMERASE SUBUNIT B"/>
    <property type="match status" value="1"/>
</dbReference>
<dbReference type="Pfam" id="PF00204">
    <property type="entry name" value="DNA_gyraseB"/>
    <property type="match status" value="1"/>
</dbReference>
<dbReference type="Pfam" id="PF00986">
    <property type="entry name" value="DNA_gyraseB_C"/>
    <property type="match status" value="1"/>
</dbReference>
<dbReference type="Pfam" id="PF02518">
    <property type="entry name" value="HATPase_c"/>
    <property type="match status" value="1"/>
</dbReference>
<dbReference type="Pfam" id="PF01751">
    <property type="entry name" value="Toprim"/>
    <property type="match status" value="1"/>
</dbReference>
<dbReference type="PRINTS" id="PR01159">
    <property type="entry name" value="DNAGYRASEB"/>
</dbReference>
<dbReference type="PRINTS" id="PR00418">
    <property type="entry name" value="TPI2FAMILY"/>
</dbReference>
<dbReference type="SMART" id="SM00387">
    <property type="entry name" value="HATPase_c"/>
    <property type="match status" value="1"/>
</dbReference>
<dbReference type="SMART" id="SM00433">
    <property type="entry name" value="TOP2c"/>
    <property type="match status" value="1"/>
</dbReference>
<dbReference type="SUPFAM" id="SSF55874">
    <property type="entry name" value="ATPase domain of HSP90 chaperone/DNA topoisomerase II/histidine kinase"/>
    <property type="match status" value="1"/>
</dbReference>
<dbReference type="SUPFAM" id="SSF54211">
    <property type="entry name" value="Ribosomal protein S5 domain 2-like"/>
    <property type="match status" value="1"/>
</dbReference>
<dbReference type="SUPFAM" id="SSF56719">
    <property type="entry name" value="Type II DNA topoisomerase"/>
    <property type="match status" value="1"/>
</dbReference>
<dbReference type="PROSITE" id="PS00177">
    <property type="entry name" value="TOPOISOMERASE_II"/>
    <property type="match status" value="1"/>
</dbReference>
<dbReference type="PROSITE" id="PS50880">
    <property type="entry name" value="TOPRIM"/>
    <property type="match status" value="1"/>
</dbReference>
<proteinExistence type="evidence at protein level"/>
<comment type="function">
    <text evidence="1 2 3">DNA gyrase negatively supercoils closed circular double-stranded DNA in an ATP-dependent manner and also catalyzes the interconversion of other topological isomers of double-stranded DNA rings, including catenanes and knotted rings.</text>
</comment>
<comment type="catalytic activity">
    <reaction evidence="1">
        <text>ATP-dependent breakage, passage and rejoining of double-stranded DNA.</text>
        <dbReference type="EC" id="5.6.2.2"/>
    </reaction>
</comment>
<comment type="cofactor">
    <cofactor evidence="1">
        <name>Mg(2+)</name>
        <dbReference type="ChEBI" id="CHEBI:18420"/>
    </cofactor>
    <cofactor evidence="1">
        <name>Mn(2+)</name>
        <dbReference type="ChEBI" id="CHEBI:29035"/>
    </cofactor>
    <cofactor evidence="1">
        <name>Ca(2+)</name>
        <dbReference type="ChEBI" id="CHEBI:29108"/>
    </cofactor>
    <text evidence="1">Binds two Mg(2+) per subunit. The magnesium ions form salt bridges with both the protein and the DNA. Can also accept other divalent metal cations, such as Mn(2+) or Ca(2+).</text>
</comment>
<comment type="activity regulation">
    <text evidence="2 3">Pyrrolopyrimidines inhibit both GyrB and its paralog in topoisomerase IV (parE) (PubMed:23352267).</text>
</comment>
<comment type="subunit">
    <text evidence="1">Heterotetramer, composed of two GyrA and two GyrB chains. Within the heterotetramer, GyrA contains the active site tyrosine that forms a covalent intermediate with the DNA, while GyrB contributes the cofactor binding sites and catalyzes ATP hydrolysis.</text>
</comment>
<comment type="subcellular location">
    <subcellularLocation>
        <location evidence="1">Cytoplasm</location>
    </subcellularLocation>
</comment>
<comment type="similarity">
    <text evidence="1">Belongs to the type II topoisomerase family.</text>
</comment>